<organism>
    <name type="scientific">Geotalea daltonii (strain DSM 22248 / JCM 15807 / FRC-32)</name>
    <name type="common">Geobacter daltonii</name>
    <dbReference type="NCBI Taxonomy" id="316067"/>
    <lineage>
        <taxon>Bacteria</taxon>
        <taxon>Pseudomonadati</taxon>
        <taxon>Thermodesulfobacteriota</taxon>
        <taxon>Desulfuromonadia</taxon>
        <taxon>Geobacterales</taxon>
        <taxon>Geobacteraceae</taxon>
        <taxon>Geotalea</taxon>
    </lineage>
</organism>
<reference key="1">
    <citation type="submission" date="2009-01" db="EMBL/GenBank/DDBJ databases">
        <title>Complete sequence of Geobacter sp. FRC-32.</title>
        <authorList>
            <consortium name="US DOE Joint Genome Institute"/>
            <person name="Lucas S."/>
            <person name="Copeland A."/>
            <person name="Lapidus A."/>
            <person name="Glavina del Rio T."/>
            <person name="Dalin E."/>
            <person name="Tice H."/>
            <person name="Bruce D."/>
            <person name="Goodwin L."/>
            <person name="Pitluck S."/>
            <person name="Saunders E."/>
            <person name="Brettin T."/>
            <person name="Detter J.C."/>
            <person name="Han C."/>
            <person name="Larimer F."/>
            <person name="Land M."/>
            <person name="Hauser L."/>
            <person name="Kyrpides N."/>
            <person name="Ovchinnikova G."/>
            <person name="Kostka J."/>
            <person name="Richardson P."/>
        </authorList>
    </citation>
    <scope>NUCLEOTIDE SEQUENCE [LARGE SCALE GENOMIC DNA]</scope>
    <source>
        <strain>DSM 22248 / JCM 15807 / FRC-32</strain>
    </source>
</reference>
<keyword id="KW-0066">ATP synthesis</keyword>
<keyword id="KW-0067">ATP-binding</keyword>
<keyword id="KW-0997">Cell inner membrane</keyword>
<keyword id="KW-1003">Cell membrane</keyword>
<keyword id="KW-0139">CF(1)</keyword>
<keyword id="KW-0375">Hydrogen ion transport</keyword>
<keyword id="KW-0406">Ion transport</keyword>
<keyword id="KW-0472">Membrane</keyword>
<keyword id="KW-0547">Nucleotide-binding</keyword>
<keyword id="KW-1185">Reference proteome</keyword>
<keyword id="KW-1278">Translocase</keyword>
<keyword id="KW-0813">Transport</keyword>
<evidence type="ECO:0000255" key="1">
    <source>
        <dbReference type="HAMAP-Rule" id="MF_01347"/>
    </source>
</evidence>
<accession>B9LZ84</accession>
<sequence length="470" mass="51033">MSQNIGKISQVIGAVIDVEFEPGKLPPIYNALRVTNPAIDDNENNLVLEVAQHLGENSVRTIAMDSTDGLVRGQAVLDTGKQISVPVGRKTLGRILNVIGEPVDEMGPVNADKEYGIHREAPEFVDQSTKVEAFTTGIKVVDLLAPYARGGKIGLFGGAGVGKTVLIMELINNIAKQHGGFSVFAGVGERTREGNDLWMEMKESGVLDKAALVYGQMNEPPGARARVALSALSIAEYFRDEEGQNVLLFIDNIFRFTQAGSEVSALLGRIPSAVGYQPTLATEMGELQERITSTNKGSITSVQAIYVPADDLTDPAPATAFAHLDATTVLSRQIAELGIYPAVDPLDSTSRILDPQVIGEEHYAIARQVQYVLQKYKDLQDIIAILGMDELSEEDKLVVARARKIQRFLSQPFHVAEAFTGSPGKYVELKDTIKGFKEIVDGKHDDIPEQAFYMVGTIEEAIEKAKKLAV</sequence>
<name>ATPB_GEODF</name>
<comment type="function">
    <text evidence="1">Produces ATP from ADP in the presence of a proton gradient across the membrane. The catalytic sites are hosted primarily by the beta subunits.</text>
</comment>
<comment type="catalytic activity">
    <reaction evidence="1">
        <text>ATP + H2O + 4 H(+)(in) = ADP + phosphate + 5 H(+)(out)</text>
        <dbReference type="Rhea" id="RHEA:57720"/>
        <dbReference type="ChEBI" id="CHEBI:15377"/>
        <dbReference type="ChEBI" id="CHEBI:15378"/>
        <dbReference type="ChEBI" id="CHEBI:30616"/>
        <dbReference type="ChEBI" id="CHEBI:43474"/>
        <dbReference type="ChEBI" id="CHEBI:456216"/>
        <dbReference type="EC" id="7.1.2.2"/>
    </reaction>
</comment>
<comment type="subunit">
    <text evidence="1">F-type ATPases have 2 components, CF(1) - the catalytic core - and CF(0) - the membrane proton channel. CF(1) has five subunits: alpha(3), beta(3), gamma(1), delta(1), epsilon(1). CF(0) has three main subunits: a(1), b(2) and c(9-12). The alpha and beta chains form an alternating ring which encloses part of the gamma chain. CF(1) is attached to CF(0) by a central stalk formed by the gamma and epsilon chains, while a peripheral stalk is formed by the delta and b chains.</text>
</comment>
<comment type="subcellular location">
    <subcellularLocation>
        <location evidence="1">Cell inner membrane</location>
        <topology evidence="1">Peripheral membrane protein</topology>
    </subcellularLocation>
</comment>
<comment type="similarity">
    <text evidence="1">Belongs to the ATPase alpha/beta chains family.</text>
</comment>
<proteinExistence type="inferred from homology"/>
<feature type="chain" id="PRO_1000166592" description="ATP synthase subunit beta">
    <location>
        <begin position="1"/>
        <end position="470"/>
    </location>
</feature>
<feature type="binding site" evidence="1">
    <location>
        <begin position="157"/>
        <end position="164"/>
    </location>
    <ligand>
        <name>ATP</name>
        <dbReference type="ChEBI" id="CHEBI:30616"/>
    </ligand>
</feature>
<protein>
    <recommendedName>
        <fullName evidence="1">ATP synthase subunit beta</fullName>
        <ecNumber evidence="1">7.1.2.2</ecNumber>
    </recommendedName>
    <alternativeName>
        <fullName evidence="1">ATP synthase F1 sector subunit beta</fullName>
    </alternativeName>
    <alternativeName>
        <fullName evidence="1">F-ATPase subunit beta</fullName>
    </alternativeName>
</protein>
<gene>
    <name evidence="1" type="primary">atpD</name>
    <name type="ordered locus">Geob_0447</name>
</gene>
<dbReference type="EC" id="7.1.2.2" evidence="1"/>
<dbReference type="EMBL" id="CP001390">
    <property type="protein sequence ID" value="ACM18816.1"/>
    <property type="molecule type" value="Genomic_DNA"/>
</dbReference>
<dbReference type="RefSeq" id="WP_012645545.1">
    <property type="nucleotide sequence ID" value="NC_011979.1"/>
</dbReference>
<dbReference type="SMR" id="B9LZ84"/>
<dbReference type="STRING" id="316067.Geob_0447"/>
<dbReference type="KEGG" id="geo:Geob_0447"/>
<dbReference type="eggNOG" id="COG0055">
    <property type="taxonomic scope" value="Bacteria"/>
</dbReference>
<dbReference type="HOGENOM" id="CLU_022398_0_2_7"/>
<dbReference type="OrthoDB" id="9801639at2"/>
<dbReference type="Proteomes" id="UP000007721">
    <property type="component" value="Chromosome"/>
</dbReference>
<dbReference type="GO" id="GO:0005886">
    <property type="term" value="C:plasma membrane"/>
    <property type="evidence" value="ECO:0007669"/>
    <property type="project" value="UniProtKB-SubCell"/>
</dbReference>
<dbReference type="GO" id="GO:0045259">
    <property type="term" value="C:proton-transporting ATP synthase complex"/>
    <property type="evidence" value="ECO:0007669"/>
    <property type="project" value="UniProtKB-KW"/>
</dbReference>
<dbReference type="GO" id="GO:0005524">
    <property type="term" value="F:ATP binding"/>
    <property type="evidence" value="ECO:0007669"/>
    <property type="project" value="UniProtKB-UniRule"/>
</dbReference>
<dbReference type="GO" id="GO:0016887">
    <property type="term" value="F:ATP hydrolysis activity"/>
    <property type="evidence" value="ECO:0007669"/>
    <property type="project" value="InterPro"/>
</dbReference>
<dbReference type="GO" id="GO:0046933">
    <property type="term" value="F:proton-transporting ATP synthase activity, rotational mechanism"/>
    <property type="evidence" value="ECO:0007669"/>
    <property type="project" value="UniProtKB-UniRule"/>
</dbReference>
<dbReference type="CDD" id="cd18110">
    <property type="entry name" value="ATP-synt_F1_beta_C"/>
    <property type="match status" value="1"/>
</dbReference>
<dbReference type="CDD" id="cd18115">
    <property type="entry name" value="ATP-synt_F1_beta_N"/>
    <property type="match status" value="1"/>
</dbReference>
<dbReference type="CDD" id="cd01133">
    <property type="entry name" value="F1-ATPase_beta_CD"/>
    <property type="match status" value="1"/>
</dbReference>
<dbReference type="FunFam" id="1.10.1140.10:FF:000001">
    <property type="entry name" value="ATP synthase subunit beta"/>
    <property type="match status" value="1"/>
</dbReference>
<dbReference type="FunFam" id="2.40.10.170:FF:000005">
    <property type="entry name" value="ATP synthase subunit beta"/>
    <property type="match status" value="1"/>
</dbReference>
<dbReference type="FunFam" id="3.40.50.300:FF:000026">
    <property type="entry name" value="ATP synthase subunit beta"/>
    <property type="match status" value="1"/>
</dbReference>
<dbReference type="Gene3D" id="2.40.10.170">
    <property type="match status" value="1"/>
</dbReference>
<dbReference type="Gene3D" id="1.10.1140.10">
    <property type="entry name" value="Bovine Mitochondrial F1-atpase, Atp Synthase Beta Chain, Chain D, domain 3"/>
    <property type="match status" value="1"/>
</dbReference>
<dbReference type="Gene3D" id="3.40.50.300">
    <property type="entry name" value="P-loop containing nucleotide triphosphate hydrolases"/>
    <property type="match status" value="1"/>
</dbReference>
<dbReference type="HAMAP" id="MF_01347">
    <property type="entry name" value="ATP_synth_beta_bact"/>
    <property type="match status" value="1"/>
</dbReference>
<dbReference type="InterPro" id="IPR003593">
    <property type="entry name" value="AAA+_ATPase"/>
</dbReference>
<dbReference type="InterPro" id="IPR055190">
    <property type="entry name" value="ATP-synt_VA_C"/>
</dbReference>
<dbReference type="InterPro" id="IPR005722">
    <property type="entry name" value="ATP_synth_F1_bsu"/>
</dbReference>
<dbReference type="InterPro" id="IPR020003">
    <property type="entry name" value="ATPase_a/bsu_AS"/>
</dbReference>
<dbReference type="InterPro" id="IPR050053">
    <property type="entry name" value="ATPase_alpha/beta_chains"/>
</dbReference>
<dbReference type="InterPro" id="IPR004100">
    <property type="entry name" value="ATPase_F1/V1/A1_a/bsu_N"/>
</dbReference>
<dbReference type="InterPro" id="IPR036121">
    <property type="entry name" value="ATPase_F1/V1/A1_a/bsu_N_sf"/>
</dbReference>
<dbReference type="InterPro" id="IPR000194">
    <property type="entry name" value="ATPase_F1/V1/A1_a/bsu_nucl-bd"/>
</dbReference>
<dbReference type="InterPro" id="IPR024034">
    <property type="entry name" value="ATPase_F1/V1_b/a_C"/>
</dbReference>
<dbReference type="InterPro" id="IPR027417">
    <property type="entry name" value="P-loop_NTPase"/>
</dbReference>
<dbReference type="NCBIfam" id="TIGR01039">
    <property type="entry name" value="atpD"/>
    <property type="match status" value="1"/>
</dbReference>
<dbReference type="PANTHER" id="PTHR15184">
    <property type="entry name" value="ATP SYNTHASE"/>
    <property type="match status" value="1"/>
</dbReference>
<dbReference type="PANTHER" id="PTHR15184:SF71">
    <property type="entry name" value="ATP SYNTHASE SUBUNIT BETA, MITOCHONDRIAL"/>
    <property type="match status" value="1"/>
</dbReference>
<dbReference type="Pfam" id="PF00006">
    <property type="entry name" value="ATP-synt_ab"/>
    <property type="match status" value="1"/>
</dbReference>
<dbReference type="Pfam" id="PF02874">
    <property type="entry name" value="ATP-synt_ab_N"/>
    <property type="match status" value="1"/>
</dbReference>
<dbReference type="Pfam" id="PF22919">
    <property type="entry name" value="ATP-synt_VA_C"/>
    <property type="match status" value="1"/>
</dbReference>
<dbReference type="PIRSF" id="PIRSF039072">
    <property type="entry name" value="ATPase_subunit_beta"/>
    <property type="match status" value="1"/>
</dbReference>
<dbReference type="SMART" id="SM00382">
    <property type="entry name" value="AAA"/>
    <property type="match status" value="1"/>
</dbReference>
<dbReference type="SUPFAM" id="SSF47917">
    <property type="entry name" value="C-terminal domain of alpha and beta subunits of F1 ATP synthase"/>
    <property type="match status" value="1"/>
</dbReference>
<dbReference type="SUPFAM" id="SSF50615">
    <property type="entry name" value="N-terminal domain of alpha and beta subunits of F1 ATP synthase"/>
    <property type="match status" value="1"/>
</dbReference>
<dbReference type="SUPFAM" id="SSF52540">
    <property type="entry name" value="P-loop containing nucleoside triphosphate hydrolases"/>
    <property type="match status" value="1"/>
</dbReference>
<dbReference type="PROSITE" id="PS00152">
    <property type="entry name" value="ATPASE_ALPHA_BETA"/>
    <property type="match status" value="1"/>
</dbReference>